<accession>Q3SZ54</accession>
<reference key="1">
    <citation type="submission" date="2005-08" db="EMBL/GenBank/DDBJ databases">
        <authorList>
            <consortium name="NIH - Mammalian Gene Collection (MGC) project"/>
        </authorList>
    </citation>
    <scope>NUCLEOTIDE SEQUENCE [LARGE SCALE MRNA]</scope>
    <source>
        <strain>Hereford</strain>
        <tissue>Fetal liver</tissue>
    </source>
</reference>
<sequence>MSASQDSRSRDNGPDGMEPEGVIESNWNEIVDSFDDMNLSESLLRGIYAYGFEKPSAIQQRAILPCIKGYDVIAQAQSGTGKTATFAISILQQIELDLKATQALVLAPTRELAQQIQKVVMALGDYMGASCHACIGGTNVRAEVQKLQMEAPHIIVGTPGRVFDMLNRRYLSPKYIKMFVLDEADEMLSRGFKDQIYDIFQKLNSNTQVVLLSATMPSDVLEVTKKFMRDPIRILVKKEELTLEGIRQFYINVEREEWKLDTLCDLYETLTITQAVIFINTRRKVDWLTEKMHARDFTVSAMHGDMDQKERDVIMREFRSGSSRVLITTDLLARGIDVQQVSLVINYDLPTNRENYIHRIGRGGRFGRKGVAINMVTEEDKRTLRDIETFYNTSIEEMPLNVADLI</sequence>
<name>IF4A1_BOVIN</name>
<protein>
    <recommendedName>
        <fullName>Eukaryotic initiation factor 4A-I</fullName>
        <shortName>eIF-4A-I</shortName>
        <shortName>eIF4A-I</shortName>
        <ecNumber>3.6.4.13</ecNumber>
    </recommendedName>
    <alternativeName>
        <fullName>ATP-dependent RNA helicase eIF4A-1</fullName>
    </alternativeName>
</protein>
<proteinExistence type="evidence at transcript level"/>
<evidence type="ECO:0000250" key="1"/>
<evidence type="ECO:0000250" key="2">
    <source>
        <dbReference type="UniProtKB" id="P60842"/>
    </source>
</evidence>
<evidence type="ECO:0000250" key="3">
    <source>
        <dbReference type="UniProtKB" id="P60843"/>
    </source>
</evidence>
<evidence type="ECO:0000255" key="4">
    <source>
        <dbReference type="PROSITE-ProRule" id="PRU00541"/>
    </source>
</evidence>
<evidence type="ECO:0000255" key="5">
    <source>
        <dbReference type="PROSITE-ProRule" id="PRU00542"/>
    </source>
</evidence>
<evidence type="ECO:0000256" key="6">
    <source>
        <dbReference type="SAM" id="MobiDB-lite"/>
    </source>
</evidence>
<evidence type="ECO:0000305" key="7"/>
<comment type="function">
    <text evidence="1 2">ATP-dependent RNA helicase which is a subunit of the eIF4F complex involved in cap recognition and is required for mRNA binding to ribosome. In the current model of translation initiation, eIF4A unwinds RNA secondary structures in the 5'-UTR of mRNAs which is necessary to allow efficient binding of the small ribosomal subunit, and subsequent scanning for the initiator codon (By similarity). As a result, promotes cell proliferation and growth (By similarity).</text>
</comment>
<comment type="catalytic activity">
    <reaction>
        <text>ATP + H2O = ADP + phosphate + H(+)</text>
        <dbReference type="Rhea" id="RHEA:13065"/>
        <dbReference type="ChEBI" id="CHEBI:15377"/>
        <dbReference type="ChEBI" id="CHEBI:15378"/>
        <dbReference type="ChEBI" id="CHEBI:30616"/>
        <dbReference type="ChEBI" id="CHEBI:43474"/>
        <dbReference type="ChEBI" id="CHEBI:456216"/>
        <dbReference type="EC" id="3.6.4.13"/>
    </reaction>
</comment>
<comment type="subunit">
    <text evidence="1 2">eIF4F is a multi-subunit complex, the composition of which varies with external and internal environmental conditions. It is composed of at least EIF4A, EIF4E and EIF4G1/EIF4G3. Interacts with PAIP1, EIF4E and UPF2. Found in a complex with XPO7, EIF4A1, ARHGAP1, VPS26A, VPS29, VPS35 and SFN. May interact with NOM1. Interacts with PDCD4; this interferes with the interaction between EIF4A and EIF4G. Interacts with RBM4 (By similarity). Interacts with DDX3X in an RNA-independent manner (By similarity). Interacts with PKP1 (via N-terminus); the interaction promotes EIF4A1 recruitment to the cap-dependent translation complex and EIF4A1 ATPase activity (By similarity).</text>
</comment>
<comment type="subcellular location">
    <subcellularLocation>
        <location evidence="2">Cytoplasm</location>
        <location evidence="2">Perinuclear region</location>
    </subcellularLocation>
    <subcellularLocation>
        <location evidence="2">Cell membrane</location>
    </subcellularLocation>
    <subcellularLocation>
        <location evidence="2">Cytoplasm</location>
        <location evidence="2">Stress granule</location>
    </subcellularLocation>
    <text evidence="2">Colocalizes with PKP1 in stress granules following arsenate or hydrogen peroxide treatment.</text>
</comment>
<comment type="similarity">
    <text evidence="7">Belongs to the DEAD box helicase family. eIF4A subfamily.</text>
</comment>
<keyword id="KW-0007">Acetylation</keyword>
<keyword id="KW-0067">ATP-binding</keyword>
<keyword id="KW-1003">Cell membrane</keyword>
<keyword id="KW-0963">Cytoplasm</keyword>
<keyword id="KW-0347">Helicase</keyword>
<keyword id="KW-0378">Hydrolase</keyword>
<keyword id="KW-0396">Initiation factor</keyword>
<keyword id="KW-1017">Isopeptide bond</keyword>
<keyword id="KW-0472">Membrane</keyword>
<keyword id="KW-0547">Nucleotide-binding</keyword>
<keyword id="KW-0597">Phosphoprotein</keyword>
<keyword id="KW-0648">Protein biosynthesis</keyword>
<keyword id="KW-1185">Reference proteome</keyword>
<keyword id="KW-0694">RNA-binding</keyword>
<keyword id="KW-0832">Ubl conjugation</keyword>
<organism>
    <name type="scientific">Bos taurus</name>
    <name type="common">Bovine</name>
    <dbReference type="NCBI Taxonomy" id="9913"/>
    <lineage>
        <taxon>Eukaryota</taxon>
        <taxon>Metazoa</taxon>
        <taxon>Chordata</taxon>
        <taxon>Craniata</taxon>
        <taxon>Vertebrata</taxon>
        <taxon>Euteleostomi</taxon>
        <taxon>Mammalia</taxon>
        <taxon>Eutheria</taxon>
        <taxon>Laurasiatheria</taxon>
        <taxon>Artiodactyla</taxon>
        <taxon>Ruminantia</taxon>
        <taxon>Pecora</taxon>
        <taxon>Bovidae</taxon>
        <taxon>Bovinae</taxon>
        <taxon>Bos</taxon>
    </lineage>
</organism>
<feature type="initiator methionine" description="Removed" evidence="2">
    <location>
        <position position="1"/>
    </location>
</feature>
<feature type="chain" id="PRO_0000244559" description="Eukaryotic initiation factor 4A-I">
    <location>
        <begin position="2"/>
        <end position="406"/>
    </location>
</feature>
<feature type="domain" description="Helicase ATP-binding" evidence="4">
    <location>
        <begin position="63"/>
        <end position="234"/>
    </location>
</feature>
<feature type="domain" description="Helicase C-terminal" evidence="5">
    <location>
        <begin position="245"/>
        <end position="406"/>
    </location>
</feature>
<feature type="region of interest" description="Disordered" evidence="6">
    <location>
        <begin position="1"/>
        <end position="21"/>
    </location>
</feature>
<feature type="short sequence motif" description="Q motif">
    <location>
        <begin position="32"/>
        <end position="60"/>
    </location>
</feature>
<feature type="short sequence motif" description="DEAD box">
    <location>
        <begin position="182"/>
        <end position="185"/>
    </location>
</feature>
<feature type="binding site" evidence="4">
    <location>
        <begin position="76"/>
        <end position="83"/>
    </location>
    <ligand>
        <name>ATP</name>
        <dbReference type="ChEBI" id="CHEBI:30616"/>
    </ligand>
</feature>
<feature type="modified residue" description="N-acetylserine" evidence="2">
    <location>
        <position position="2"/>
    </location>
</feature>
<feature type="modified residue" description="Phosphoserine" evidence="2">
    <location>
        <position position="4"/>
    </location>
</feature>
<feature type="modified residue" description="N6-acetyllysine" evidence="2">
    <location>
        <position position="118"/>
    </location>
</feature>
<feature type="modified residue" description="Phosphothreonine" evidence="2">
    <location>
        <position position="158"/>
    </location>
</feature>
<feature type="modified residue" description="N6-acetyllysine" evidence="2">
    <location>
        <position position="174"/>
    </location>
</feature>
<feature type="modified residue" description="N6-acetyllysine" evidence="3">
    <location>
        <position position="193"/>
    </location>
</feature>
<feature type="modified residue" description="N6-acetyllysine; alternate" evidence="3">
    <location>
        <position position="238"/>
    </location>
</feature>
<feature type="cross-link" description="Glycyl lysine isopeptide (Lys-Gly) (interchain with G-Cter in SUMO2)" evidence="2">
    <location>
        <position position="146"/>
    </location>
</feature>
<feature type="cross-link" description="Glycyl lysine isopeptide (Lys-Gly) (interchain with G-Cter in SUMO2)" evidence="2">
    <location>
        <position position="225"/>
    </location>
</feature>
<feature type="cross-link" description="Glycyl lysine isopeptide (Lys-Gly) (interchain with G-Cter in SUMO2); alternate" evidence="2">
    <location>
        <position position="238"/>
    </location>
</feature>
<feature type="cross-link" description="Glycyl lysine isopeptide (Lys-Gly) (interchain with G-Cter in SUMO2)" evidence="2">
    <location>
        <position position="309"/>
    </location>
</feature>
<feature type="cross-link" description="Glycyl lysine isopeptide (Lys-Gly) (interchain with G-Cter in SUMO2)" evidence="2">
    <location>
        <position position="369"/>
    </location>
</feature>
<feature type="cross-link" description="Glycyl lysine isopeptide (Lys-Gly) (interchain with G-Cter in SUMO2)" evidence="2">
    <location>
        <position position="381"/>
    </location>
</feature>
<dbReference type="EC" id="3.6.4.13"/>
<dbReference type="EMBL" id="BC103130">
    <property type="protein sequence ID" value="AAI03131.1"/>
    <property type="molecule type" value="mRNA"/>
</dbReference>
<dbReference type="RefSeq" id="NP_001029400.1">
    <property type="nucleotide sequence ID" value="NM_001034228.1"/>
</dbReference>
<dbReference type="SMR" id="Q3SZ54"/>
<dbReference type="FunCoup" id="Q3SZ54">
    <property type="interactions" value="2892"/>
</dbReference>
<dbReference type="STRING" id="9913.ENSBTAP00000000144"/>
<dbReference type="PaxDb" id="9913-ENSBTAP00000000144"/>
<dbReference type="PeptideAtlas" id="Q3SZ54"/>
<dbReference type="Ensembl" id="ENSBTAT00000000144.4">
    <property type="protein sequence ID" value="ENSBTAP00000000144.2"/>
    <property type="gene ID" value="ENSBTAG00000000132.4"/>
</dbReference>
<dbReference type="GeneID" id="504958"/>
<dbReference type="KEGG" id="bta:504958"/>
<dbReference type="CTD" id="1973"/>
<dbReference type="VEuPathDB" id="HostDB:ENSBTAG00000000132"/>
<dbReference type="VGNC" id="VGNC:28404">
    <property type="gene designation" value="EIF4A1"/>
</dbReference>
<dbReference type="eggNOG" id="KOG0327">
    <property type="taxonomic scope" value="Eukaryota"/>
</dbReference>
<dbReference type="GeneTree" id="ENSGT00940000153889"/>
<dbReference type="HOGENOM" id="CLU_003041_1_0_1"/>
<dbReference type="InParanoid" id="Q3SZ54"/>
<dbReference type="OMA" id="DTIHGDK"/>
<dbReference type="OrthoDB" id="10265785at2759"/>
<dbReference type="TreeFam" id="TF101524"/>
<dbReference type="Reactome" id="R-BTA-1169408">
    <property type="pathway name" value="ISG15 antiviral mechanism"/>
</dbReference>
<dbReference type="Reactome" id="R-BTA-156827">
    <property type="pathway name" value="L13a-mediated translational silencing of Ceruloplasmin expression"/>
</dbReference>
<dbReference type="Reactome" id="R-BTA-429947">
    <property type="pathway name" value="Deadenylation of mRNA"/>
</dbReference>
<dbReference type="Reactome" id="R-BTA-72649">
    <property type="pathway name" value="Translation initiation complex formation"/>
</dbReference>
<dbReference type="Reactome" id="R-BTA-72702">
    <property type="pathway name" value="Ribosomal scanning and start codon recognition"/>
</dbReference>
<dbReference type="Proteomes" id="UP000009136">
    <property type="component" value="Chromosome 19"/>
</dbReference>
<dbReference type="Bgee" id="ENSBTAG00000000132">
    <property type="expression patterns" value="Expressed in spermatocyte and 107 other cell types or tissues"/>
</dbReference>
<dbReference type="GO" id="GO:0010494">
    <property type="term" value="C:cytoplasmic stress granule"/>
    <property type="evidence" value="ECO:0007669"/>
    <property type="project" value="UniProtKB-SubCell"/>
</dbReference>
<dbReference type="GO" id="GO:0097165">
    <property type="term" value="C:nuclear stress granule"/>
    <property type="evidence" value="ECO:0000250"/>
    <property type="project" value="UniProtKB"/>
</dbReference>
<dbReference type="GO" id="GO:0048471">
    <property type="term" value="C:perinuclear region of cytoplasm"/>
    <property type="evidence" value="ECO:0000250"/>
    <property type="project" value="UniProtKB"/>
</dbReference>
<dbReference type="GO" id="GO:0005886">
    <property type="term" value="C:plasma membrane"/>
    <property type="evidence" value="ECO:0000250"/>
    <property type="project" value="UniProtKB"/>
</dbReference>
<dbReference type="GO" id="GO:0005524">
    <property type="term" value="F:ATP binding"/>
    <property type="evidence" value="ECO:0007669"/>
    <property type="project" value="UniProtKB-KW"/>
</dbReference>
<dbReference type="GO" id="GO:0016887">
    <property type="term" value="F:ATP hydrolysis activity"/>
    <property type="evidence" value="ECO:0007669"/>
    <property type="project" value="RHEA"/>
</dbReference>
<dbReference type="GO" id="GO:0003723">
    <property type="term" value="F:RNA binding"/>
    <property type="evidence" value="ECO:0007669"/>
    <property type="project" value="UniProtKB-KW"/>
</dbReference>
<dbReference type="GO" id="GO:0003724">
    <property type="term" value="F:RNA helicase activity"/>
    <property type="evidence" value="ECO:0007669"/>
    <property type="project" value="UniProtKB-EC"/>
</dbReference>
<dbReference type="GO" id="GO:0003743">
    <property type="term" value="F:translation initiation factor activity"/>
    <property type="evidence" value="ECO:0000318"/>
    <property type="project" value="GO_Central"/>
</dbReference>
<dbReference type="GO" id="GO:0002183">
    <property type="term" value="P:cytoplasmic translational initiation"/>
    <property type="evidence" value="ECO:0000318"/>
    <property type="project" value="GO_Central"/>
</dbReference>
<dbReference type="GO" id="GO:0045944">
    <property type="term" value="P:positive regulation of transcription by RNA polymerase II"/>
    <property type="evidence" value="ECO:0000250"/>
    <property type="project" value="UniProtKB"/>
</dbReference>
<dbReference type="CDD" id="cd18046">
    <property type="entry name" value="DEADc_EIF4AII_EIF4AI_DDX2"/>
    <property type="match status" value="1"/>
</dbReference>
<dbReference type="CDD" id="cd18787">
    <property type="entry name" value="SF2_C_DEAD"/>
    <property type="match status" value="1"/>
</dbReference>
<dbReference type="FunFam" id="3.40.50.300:FF:000089">
    <property type="entry name" value="Eukaryotic initiation factor 4A-II"/>
    <property type="match status" value="1"/>
</dbReference>
<dbReference type="FunFam" id="3.40.50.300:FF:000031">
    <property type="entry name" value="Eukaryotic initiation factor 4A-III"/>
    <property type="match status" value="1"/>
</dbReference>
<dbReference type="Gene3D" id="3.40.50.300">
    <property type="entry name" value="P-loop containing nucleotide triphosphate hydrolases"/>
    <property type="match status" value="2"/>
</dbReference>
<dbReference type="InterPro" id="IPR011545">
    <property type="entry name" value="DEAD/DEAH_box_helicase_dom"/>
</dbReference>
<dbReference type="InterPro" id="IPR044728">
    <property type="entry name" value="EIF4A_DEADc"/>
</dbReference>
<dbReference type="InterPro" id="IPR014001">
    <property type="entry name" value="Helicase_ATP-bd"/>
</dbReference>
<dbReference type="InterPro" id="IPR001650">
    <property type="entry name" value="Helicase_C-like"/>
</dbReference>
<dbReference type="InterPro" id="IPR027417">
    <property type="entry name" value="P-loop_NTPase"/>
</dbReference>
<dbReference type="InterPro" id="IPR000629">
    <property type="entry name" value="RNA-helicase_DEAD-box_CS"/>
</dbReference>
<dbReference type="InterPro" id="IPR014014">
    <property type="entry name" value="RNA_helicase_DEAD_Q_motif"/>
</dbReference>
<dbReference type="PANTHER" id="PTHR47958">
    <property type="entry name" value="ATP-DEPENDENT RNA HELICASE DBP3"/>
    <property type="match status" value="1"/>
</dbReference>
<dbReference type="Pfam" id="PF00270">
    <property type="entry name" value="DEAD"/>
    <property type="match status" value="1"/>
</dbReference>
<dbReference type="Pfam" id="PF00271">
    <property type="entry name" value="Helicase_C"/>
    <property type="match status" value="1"/>
</dbReference>
<dbReference type="SMART" id="SM00487">
    <property type="entry name" value="DEXDc"/>
    <property type="match status" value="1"/>
</dbReference>
<dbReference type="SMART" id="SM00490">
    <property type="entry name" value="HELICc"/>
    <property type="match status" value="1"/>
</dbReference>
<dbReference type="SUPFAM" id="SSF52540">
    <property type="entry name" value="P-loop containing nucleoside triphosphate hydrolases"/>
    <property type="match status" value="1"/>
</dbReference>
<dbReference type="PROSITE" id="PS00039">
    <property type="entry name" value="DEAD_ATP_HELICASE"/>
    <property type="match status" value="1"/>
</dbReference>
<dbReference type="PROSITE" id="PS51192">
    <property type="entry name" value="HELICASE_ATP_BIND_1"/>
    <property type="match status" value="1"/>
</dbReference>
<dbReference type="PROSITE" id="PS51194">
    <property type="entry name" value="HELICASE_CTER"/>
    <property type="match status" value="1"/>
</dbReference>
<dbReference type="PROSITE" id="PS51195">
    <property type="entry name" value="Q_MOTIF"/>
    <property type="match status" value="1"/>
</dbReference>
<gene>
    <name type="primary">EIF4A1</name>
</gene>